<dbReference type="EC" id="2.7.7.3" evidence="1"/>
<dbReference type="EMBL" id="CP001022">
    <property type="protein sequence ID" value="ACB61427.1"/>
    <property type="molecule type" value="Genomic_DNA"/>
</dbReference>
<dbReference type="RefSeq" id="WP_012370845.1">
    <property type="nucleotide sequence ID" value="NC_010556.1"/>
</dbReference>
<dbReference type="SMR" id="B1YIV1"/>
<dbReference type="STRING" id="262543.Exig_1975"/>
<dbReference type="KEGG" id="esi:Exig_1975"/>
<dbReference type="eggNOG" id="COG0669">
    <property type="taxonomic scope" value="Bacteria"/>
</dbReference>
<dbReference type="HOGENOM" id="CLU_100149_0_1_9"/>
<dbReference type="OrthoDB" id="9806661at2"/>
<dbReference type="UniPathway" id="UPA00241">
    <property type="reaction ID" value="UER00355"/>
</dbReference>
<dbReference type="Proteomes" id="UP000001681">
    <property type="component" value="Chromosome"/>
</dbReference>
<dbReference type="GO" id="GO:0005737">
    <property type="term" value="C:cytoplasm"/>
    <property type="evidence" value="ECO:0007669"/>
    <property type="project" value="UniProtKB-SubCell"/>
</dbReference>
<dbReference type="GO" id="GO:0005524">
    <property type="term" value="F:ATP binding"/>
    <property type="evidence" value="ECO:0007669"/>
    <property type="project" value="UniProtKB-KW"/>
</dbReference>
<dbReference type="GO" id="GO:0004595">
    <property type="term" value="F:pantetheine-phosphate adenylyltransferase activity"/>
    <property type="evidence" value="ECO:0007669"/>
    <property type="project" value="UniProtKB-UniRule"/>
</dbReference>
<dbReference type="GO" id="GO:0015937">
    <property type="term" value="P:coenzyme A biosynthetic process"/>
    <property type="evidence" value="ECO:0007669"/>
    <property type="project" value="UniProtKB-UniRule"/>
</dbReference>
<dbReference type="CDD" id="cd02163">
    <property type="entry name" value="PPAT"/>
    <property type="match status" value="1"/>
</dbReference>
<dbReference type="FunFam" id="3.40.50.620:FF:000012">
    <property type="entry name" value="Phosphopantetheine adenylyltransferase"/>
    <property type="match status" value="1"/>
</dbReference>
<dbReference type="Gene3D" id="3.40.50.620">
    <property type="entry name" value="HUPs"/>
    <property type="match status" value="1"/>
</dbReference>
<dbReference type="HAMAP" id="MF_00151">
    <property type="entry name" value="PPAT_bact"/>
    <property type="match status" value="1"/>
</dbReference>
<dbReference type="InterPro" id="IPR004821">
    <property type="entry name" value="Cyt_trans-like"/>
</dbReference>
<dbReference type="InterPro" id="IPR001980">
    <property type="entry name" value="PPAT"/>
</dbReference>
<dbReference type="InterPro" id="IPR014729">
    <property type="entry name" value="Rossmann-like_a/b/a_fold"/>
</dbReference>
<dbReference type="NCBIfam" id="TIGR01510">
    <property type="entry name" value="coaD_prev_kdtB"/>
    <property type="match status" value="1"/>
</dbReference>
<dbReference type="NCBIfam" id="TIGR00125">
    <property type="entry name" value="cyt_tran_rel"/>
    <property type="match status" value="1"/>
</dbReference>
<dbReference type="PANTHER" id="PTHR21342">
    <property type="entry name" value="PHOSPHOPANTETHEINE ADENYLYLTRANSFERASE"/>
    <property type="match status" value="1"/>
</dbReference>
<dbReference type="PANTHER" id="PTHR21342:SF1">
    <property type="entry name" value="PHOSPHOPANTETHEINE ADENYLYLTRANSFERASE"/>
    <property type="match status" value="1"/>
</dbReference>
<dbReference type="Pfam" id="PF01467">
    <property type="entry name" value="CTP_transf_like"/>
    <property type="match status" value="1"/>
</dbReference>
<dbReference type="PRINTS" id="PR01020">
    <property type="entry name" value="LPSBIOSNTHSS"/>
</dbReference>
<dbReference type="SUPFAM" id="SSF52374">
    <property type="entry name" value="Nucleotidylyl transferase"/>
    <property type="match status" value="1"/>
</dbReference>
<protein>
    <recommendedName>
        <fullName evidence="1">Phosphopantetheine adenylyltransferase</fullName>
        <ecNumber evidence="1">2.7.7.3</ecNumber>
    </recommendedName>
    <alternativeName>
        <fullName evidence="1">Dephospho-CoA pyrophosphorylase</fullName>
    </alternativeName>
    <alternativeName>
        <fullName evidence="1">Pantetheine-phosphate adenylyltransferase</fullName>
        <shortName evidence="1">PPAT</shortName>
    </alternativeName>
</protein>
<organism>
    <name type="scientific">Exiguobacterium sibiricum (strain DSM 17290 / CCUG 55495 / CIP 109462 / JCM 13490 / 255-15)</name>
    <dbReference type="NCBI Taxonomy" id="262543"/>
    <lineage>
        <taxon>Bacteria</taxon>
        <taxon>Bacillati</taxon>
        <taxon>Bacillota</taxon>
        <taxon>Bacilli</taxon>
        <taxon>Bacillales</taxon>
        <taxon>Bacillales Family XII. Incertae Sedis</taxon>
        <taxon>Exiguobacterium</taxon>
    </lineage>
</organism>
<accession>B1YIV1</accession>
<name>COAD_EXIS2</name>
<feature type="chain" id="PRO_1000096793" description="Phosphopantetheine adenylyltransferase">
    <location>
        <begin position="1"/>
        <end position="164"/>
    </location>
</feature>
<feature type="binding site" evidence="1">
    <location>
        <begin position="10"/>
        <end position="11"/>
    </location>
    <ligand>
        <name>ATP</name>
        <dbReference type="ChEBI" id="CHEBI:30616"/>
    </ligand>
</feature>
<feature type="binding site" evidence="1">
    <location>
        <position position="10"/>
    </location>
    <ligand>
        <name>substrate</name>
    </ligand>
</feature>
<feature type="binding site" evidence="1">
    <location>
        <position position="18"/>
    </location>
    <ligand>
        <name>ATP</name>
        <dbReference type="ChEBI" id="CHEBI:30616"/>
    </ligand>
</feature>
<feature type="binding site" evidence="1">
    <location>
        <position position="42"/>
    </location>
    <ligand>
        <name>substrate</name>
    </ligand>
</feature>
<feature type="binding site" evidence="1">
    <location>
        <position position="74"/>
    </location>
    <ligand>
        <name>substrate</name>
    </ligand>
</feature>
<feature type="binding site" evidence="1">
    <location>
        <position position="88"/>
    </location>
    <ligand>
        <name>substrate</name>
    </ligand>
</feature>
<feature type="binding site" evidence="1">
    <location>
        <begin position="89"/>
        <end position="91"/>
    </location>
    <ligand>
        <name>ATP</name>
        <dbReference type="ChEBI" id="CHEBI:30616"/>
    </ligand>
</feature>
<feature type="binding site" evidence="1">
    <location>
        <position position="99"/>
    </location>
    <ligand>
        <name>ATP</name>
        <dbReference type="ChEBI" id="CHEBI:30616"/>
    </ligand>
</feature>
<feature type="binding site" evidence="1">
    <location>
        <begin position="124"/>
        <end position="130"/>
    </location>
    <ligand>
        <name>ATP</name>
        <dbReference type="ChEBI" id="CHEBI:30616"/>
    </ligand>
</feature>
<feature type="site" description="Transition state stabilizer" evidence="1">
    <location>
        <position position="18"/>
    </location>
</feature>
<keyword id="KW-0067">ATP-binding</keyword>
<keyword id="KW-0173">Coenzyme A biosynthesis</keyword>
<keyword id="KW-0963">Cytoplasm</keyword>
<keyword id="KW-0460">Magnesium</keyword>
<keyword id="KW-0547">Nucleotide-binding</keyword>
<keyword id="KW-0548">Nucleotidyltransferase</keyword>
<keyword id="KW-1185">Reference proteome</keyword>
<keyword id="KW-0808">Transferase</keyword>
<gene>
    <name evidence="1" type="primary">coaD</name>
    <name type="ordered locus">Exig_1975</name>
</gene>
<evidence type="ECO:0000255" key="1">
    <source>
        <dbReference type="HAMAP-Rule" id="MF_00151"/>
    </source>
</evidence>
<comment type="function">
    <text evidence="1">Reversibly transfers an adenylyl group from ATP to 4'-phosphopantetheine, yielding dephospho-CoA (dPCoA) and pyrophosphate.</text>
</comment>
<comment type="catalytic activity">
    <reaction evidence="1">
        <text>(R)-4'-phosphopantetheine + ATP + H(+) = 3'-dephospho-CoA + diphosphate</text>
        <dbReference type="Rhea" id="RHEA:19801"/>
        <dbReference type="ChEBI" id="CHEBI:15378"/>
        <dbReference type="ChEBI" id="CHEBI:30616"/>
        <dbReference type="ChEBI" id="CHEBI:33019"/>
        <dbReference type="ChEBI" id="CHEBI:57328"/>
        <dbReference type="ChEBI" id="CHEBI:61723"/>
        <dbReference type="EC" id="2.7.7.3"/>
    </reaction>
</comment>
<comment type="cofactor">
    <cofactor evidence="1">
        <name>Mg(2+)</name>
        <dbReference type="ChEBI" id="CHEBI:18420"/>
    </cofactor>
</comment>
<comment type="pathway">
    <text evidence="1">Cofactor biosynthesis; coenzyme A biosynthesis; CoA from (R)-pantothenate: step 4/5.</text>
</comment>
<comment type="subunit">
    <text evidence="1">Homohexamer.</text>
</comment>
<comment type="subcellular location">
    <subcellularLocation>
        <location evidence="1">Cytoplasm</location>
    </subcellularLocation>
</comment>
<comment type="similarity">
    <text evidence="1">Belongs to the bacterial CoaD family.</text>
</comment>
<sequence length="164" mass="18173">MKRIAICPGSFDPITNGHLDIIERAAPIFDEIIVAVLNNSSKQPLFSVQERMELISEVTEHLPHIKVDAFNGLLVDYASTVGADVIVRGLRAVSDFEYEMQVASINKKMNDQIETLFMMTNNQYSFLSSSIVKEAAKYGASVAGLVPPAVEEALRHKYSEGELR</sequence>
<proteinExistence type="inferred from homology"/>
<reference key="1">
    <citation type="submission" date="2008-04" db="EMBL/GenBank/DDBJ databases">
        <title>Complete sequence of chromosome of Exiguobacterium sibiricum 255-15.</title>
        <authorList>
            <consortium name="US DOE Joint Genome Institute"/>
            <person name="Copeland A."/>
            <person name="Lucas S."/>
            <person name="Lapidus A."/>
            <person name="Glavina del Rio T."/>
            <person name="Dalin E."/>
            <person name="Tice H."/>
            <person name="Bruce D."/>
            <person name="Goodwin L."/>
            <person name="Pitluck S."/>
            <person name="Kiss H."/>
            <person name="Chertkov O."/>
            <person name="Monk C."/>
            <person name="Brettin T."/>
            <person name="Detter J.C."/>
            <person name="Han C."/>
            <person name="Kuske C.R."/>
            <person name="Schmutz J."/>
            <person name="Larimer F."/>
            <person name="Land M."/>
            <person name="Hauser L."/>
            <person name="Kyrpides N."/>
            <person name="Mikhailova N."/>
            <person name="Vishnivetskaya T."/>
            <person name="Rodrigues D.F."/>
            <person name="Gilichinsky D."/>
            <person name="Tiedje J."/>
            <person name="Richardson P."/>
        </authorList>
    </citation>
    <scope>NUCLEOTIDE SEQUENCE [LARGE SCALE GENOMIC DNA]</scope>
    <source>
        <strain>DSM 17290 / CCUG 55495 / CIP 109462 / JCM 13490 / 255-15</strain>
    </source>
</reference>